<organism>
    <name type="scientific">Streptococcus pneumoniae serotype 4 (strain ATCC BAA-334 / TIGR4)</name>
    <dbReference type="NCBI Taxonomy" id="170187"/>
    <lineage>
        <taxon>Bacteria</taxon>
        <taxon>Bacillati</taxon>
        <taxon>Bacillota</taxon>
        <taxon>Bacilli</taxon>
        <taxon>Lactobacillales</taxon>
        <taxon>Streptococcaceae</taxon>
        <taxon>Streptococcus</taxon>
    </lineage>
</organism>
<comment type="function">
    <text evidence="1">Catalyzes the condensation of para-aminobenzoate (pABA) with 6-hydroxymethyl-7,8-dihydropterin diphosphate (DHPt-PP) to form 7,8-dihydropteroate (H2Pte), the immediate precursor of folate derivatives.</text>
</comment>
<comment type="catalytic activity">
    <reaction evidence="1">
        <text>(7,8-dihydropterin-6-yl)methyl diphosphate + 4-aminobenzoate = 7,8-dihydropteroate + diphosphate</text>
        <dbReference type="Rhea" id="RHEA:19949"/>
        <dbReference type="ChEBI" id="CHEBI:17836"/>
        <dbReference type="ChEBI" id="CHEBI:17839"/>
        <dbReference type="ChEBI" id="CHEBI:33019"/>
        <dbReference type="ChEBI" id="CHEBI:72950"/>
        <dbReference type="EC" id="2.5.1.15"/>
    </reaction>
</comment>
<comment type="cofactor">
    <cofactor evidence="1">
        <name>Mg(2+)</name>
        <dbReference type="ChEBI" id="CHEBI:18420"/>
    </cofactor>
</comment>
<comment type="pathway">
    <text>Cofactor biosynthesis; tetrahydrofolate biosynthesis; 7,8-dihydrofolate from 2-amino-4-hydroxy-6-hydroxymethyl-7,8-dihydropteridine diphosphate and 4-aminobenzoate: step 1/2.</text>
</comment>
<comment type="subunit">
    <text>Homodimer or homotrimer.</text>
</comment>
<comment type="interaction">
    <interactant intactId="EBI-2206997">
        <id>P05382</id>
    </interactant>
    <interactant intactId="EBI-2206949">
        <id>Q97NV3</id>
        <label>groES</label>
    </interactant>
    <organismsDiffer>false</organismsDiffer>
    <experiments>2</experiments>
</comment>
<comment type="interaction">
    <interactant intactId="EBI-2206997">
        <id>P05382</id>
    </interactant>
    <interactant intactId="EBI-2207435">
        <id>P0A4T1</id>
        <label>malR</label>
    </interactant>
    <organismsDiffer>false</organismsDiffer>
    <experiments>2</experiments>
</comment>
<comment type="interaction">
    <interactant intactId="EBI-2206997">
        <id>P05382</id>
    </interactant>
    <interactant intactId="EBI-6472250">
        <id>A0A0H2UPV6</id>
        <label>SP_1069</label>
    </interactant>
    <organismsDiffer>false</organismsDiffer>
    <experiments>4</experiments>
</comment>
<comment type="miscellaneous">
    <text>The sequence shown here is that of sul-s (wild-type). The protein of the spontaneous mutation to sulfonamide resistance (sul-d) has an insert of 2 AA.</text>
</comment>
<comment type="similarity">
    <text evidence="4">Belongs to the DHPS family.</text>
</comment>
<feature type="chain" id="PRO_0000168230" description="Dihydropteroate synthase">
    <location>
        <begin position="1"/>
        <end position="314"/>
    </location>
</feature>
<feature type="domain" description="Pterin-binding" evidence="3">
    <location>
        <begin position="10"/>
        <end position="294"/>
    </location>
</feature>
<feature type="binding site" evidence="2">
    <location>
        <position position="17"/>
    </location>
    <ligand>
        <name>Mg(2+)</name>
        <dbReference type="ChEBI" id="CHEBI:18420"/>
    </ligand>
</feature>
<feature type="binding site" evidence="1">
    <location>
        <position position="57"/>
    </location>
    <ligand>
        <name>(7,8-dihydropterin-6-yl)methyl diphosphate</name>
        <dbReference type="ChEBI" id="CHEBI:72950"/>
    </ligand>
</feature>
<feature type="binding site" evidence="1">
    <location>
        <position position="91"/>
    </location>
    <ligand>
        <name>(7,8-dihydropterin-6-yl)methyl diphosphate</name>
        <dbReference type="ChEBI" id="CHEBI:72950"/>
    </ligand>
</feature>
<feature type="binding site" evidence="1">
    <location>
        <position position="110"/>
    </location>
    <ligand>
        <name>(7,8-dihydropterin-6-yl)methyl diphosphate</name>
        <dbReference type="ChEBI" id="CHEBI:72950"/>
    </ligand>
</feature>
<feature type="binding site" evidence="1">
    <location>
        <position position="201"/>
    </location>
    <ligand>
        <name>(7,8-dihydropterin-6-yl)methyl diphosphate</name>
        <dbReference type="ChEBI" id="CHEBI:72950"/>
    </ligand>
</feature>
<feature type="binding site" evidence="1">
    <location>
        <position position="237"/>
    </location>
    <ligand>
        <name>(7,8-dihydropterin-6-yl)methyl diphosphate</name>
        <dbReference type="ChEBI" id="CHEBI:72950"/>
    </ligand>
</feature>
<feature type="binding site" evidence="1">
    <location>
        <begin position="282"/>
        <end position="284"/>
    </location>
    <ligand>
        <name>(7,8-dihydropterin-6-yl)methyl diphosphate</name>
        <dbReference type="ChEBI" id="CHEBI:72950"/>
    </ligand>
</feature>
<feature type="sequence variant" description="In mutant SUL-D.">
    <original>E</original>
    <variation>EIE</variation>
    <location>
        <position position="67"/>
    </location>
</feature>
<feature type="sequence conflict" description="In Ref. 1; AAB63944." evidence="4" ref="1">
    <original>AY</original>
    <variation>PH</variation>
    <location>
        <begin position="122"/>
        <end position="123"/>
    </location>
</feature>
<feature type="sequence conflict" description="In Ref. 1; AAB63944." evidence="4" ref="1">
    <original>K</original>
    <variation>Q</variation>
    <location>
        <position position="131"/>
    </location>
</feature>
<feature type="sequence conflict" description="In Ref. 1; AAB63944." evidence="4" ref="1">
    <original>T</original>
    <variation>A</variation>
    <location>
        <position position="159"/>
    </location>
</feature>
<feature type="sequence conflict" description="In Ref. 1; AAB63944." evidence="4" ref="1">
    <original>K</original>
    <variation>E</variation>
    <location>
        <position position="163"/>
    </location>
</feature>
<feature type="sequence conflict" description="In Ref. 1; AAB63944." evidence="4" ref="1">
    <original>D</original>
    <variation>E</variation>
    <location>
        <position position="175"/>
    </location>
</feature>
<feature type="sequence conflict" description="In Ref. 1; AAB63944." evidence="4" ref="1">
    <original>V</original>
    <variation>E</variation>
    <location>
        <position position="178"/>
    </location>
</feature>
<protein>
    <recommendedName>
        <fullName>Dihydropteroate synthase</fullName>
        <shortName>DHPS</shortName>
        <ecNumber>2.5.1.15</ecNumber>
    </recommendedName>
    <alternativeName>
        <fullName>Dihydropteroate pyrophosphorylase</fullName>
    </alternativeName>
</protein>
<gene>
    <name type="primary">sulA</name>
    <name type="ordered locus">SP_0289</name>
</gene>
<reference key="1">
    <citation type="journal article" date="1987" name="J. Bacteriol.">
        <title>Sulfonamide resistance in Streptococcus pneumoniae: DNA sequence of the gene encoding dihydropteroate synthase and characterization of the enzyme.</title>
        <authorList>
            <person name="Lopez P."/>
            <person name="Espinosa M."/>
            <person name="Greenberg B."/>
            <person name="Lacks S.A."/>
        </authorList>
    </citation>
    <scope>NUCLEOTIDE SEQUENCE [GENOMIC DNA]</scope>
    <source>
        <strain>772</strain>
    </source>
</reference>
<reference key="2">
    <citation type="journal article" date="2001" name="Science">
        <title>Complete genome sequence of a virulent isolate of Streptococcus pneumoniae.</title>
        <authorList>
            <person name="Tettelin H."/>
            <person name="Nelson K.E."/>
            <person name="Paulsen I.T."/>
            <person name="Eisen J.A."/>
            <person name="Read T.D."/>
            <person name="Peterson S.N."/>
            <person name="Heidelberg J.F."/>
            <person name="DeBoy R.T."/>
            <person name="Haft D.H."/>
            <person name="Dodson R.J."/>
            <person name="Durkin A.S."/>
            <person name="Gwinn M.L."/>
            <person name="Kolonay J.F."/>
            <person name="Nelson W.C."/>
            <person name="Peterson J.D."/>
            <person name="Umayam L.A."/>
            <person name="White O."/>
            <person name="Salzberg S.L."/>
            <person name="Lewis M.R."/>
            <person name="Radune D."/>
            <person name="Holtzapple E.K."/>
            <person name="Khouri H.M."/>
            <person name="Wolf A.M."/>
            <person name="Utterback T.R."/>
            <person name="Hansen C.L."/>
            <person name="McDonald L.A."/>
            <person name="Feldblyum T.V."/>
            <person name="Angiuoli S.V."/>
            <person name="Dickinson T."/>
            <person name="Hickey E.K."/>
            <person name="Holt I.E."/>
            <person name="Loftus B.J."/>
            <person name="Yang F."/>
            <person name="Smith H.O."/>
            <person name="Venter J.C."/>
            <person name="Dougherty B.A."/>
            <person name="Morrison D.A."/>
            <person name="Hollingshead S.K."/>
            <person name="Fraser C.M."/>
        </authorList>
    </citation>
    <scope>NUCLEOTIDE SEQUENCE [LARGE SCALE GENOMIC DNA]</scope>
    <source>
        <strain>ATCC BAA-334 / TIGR4</strain>
    </source>
</reference>
<accession>P05382</accession>
<proteinExistence type="evidence at protein level"/>
<keyword id="KW-0289">Folate biosynthesis</keyword>
<keyword id="KW-0460">Magnesium</keyword>
<keyword id="KW-0479">Metal-binding</keyword>
<keyword id="KW-1185">Reference proteome</keyword>
<keyword id="KW-0808">Transferase</keyword>
<dbReference type="EC" id="2.5.1.15"/>
<dbReference type="EMBL" id="U16156">
    <property type="protein sequence ID" value="AAB63944.1"/>
    <property type="molecule type" value="Genomic_DNA"/>
</dbReference>
<dbReference type="EMBL" id="AE005672">
    <property type="protein sequence ID" value="AAK74467.1"/>
    <property type="molecule type" value="Genomic_DNA"/>
</dbReference>
<dbReference type="PIR" id="A43661">
    <property type="entry name" value="A43661"/>
</dbReference>
<dbReference type="PIR" id="B95034">
    <property type="entry name" value="B95034"/>
</dbReference>
<dbReference type="PIR" id="B97905">
    <property type="entry name" value="B97905"/>
</dbReference>
<dbReference type="SMR" id="P05382"/>
<dbReference type="IntAct" id="P05382">
    <property type="interactions" value="3"/>
</dbReference>
<dbReference type="PaxDb" id="170187-SP_0289"/>
<dbReference type="EnsemblBacteria" id="AAK74467">
    <property type="protein sequence ID" value="AAK74467"/>
    <property type="gene ID" value="SP_0289"/>
</dbReference>
<dbReference type="KEGG" id="spn:SP_0289"/>
<dbReference type="eggNOG" id="COG0294">
    <property type="taxonomic scope" value="Bacteria"/>
</dbReference>
<dbReference type="PhylomeDB" id="P05382"/>
<dbReference type="BioCyc" id="SPNE170187:G1FZB-298-MONOMER"/>
<dbReference type="SABIO-RK" id="P05382"/>
<dbReference type="UniPathway" id="UPA00077">
    <property type="reaction ID" value="UER00156"/>
</dbReference>
<dbReference type="Proteomes" id="UP000000585">
    <property type="component" value="Chromosome"/>
</dbReference>
<dbReference type="GO" id="GO:0005829">
    <property type="term" value="C:cytosol"/>
    <property type="evidence" value="ECO:0007669"/>
    <property type="project" value="TreeGrafter"/>
</dbReference>
<dbReference type="GO" id="GO:0004156">
    <property type="term" value="F:dihydropteroate synthase activity"/>
    <property type="evidence" value="ECO:0007669"/>
    <property type="project" value="UniProtKB-EC"/>
</dbReference>
<dbReference type="GO" id="GO:0046872">
    <property type="term" value="F:metal ion binding"/>
    <property type="evidence" value="ECO:0007669"/>
    <property type="project" value="UniProtKB-KW"/>
</dbReference>
<dbReference type="GO" id="GO:0046656">
    <property type="term" value="P:folic acid biosynthetic process"/>
    <property type="evidence" value="ECO:0007669"/>
    <property type="project" value="UniProtKB-KW"/>
</dbReference>
<dbReference type="GO" id="GO:0046654">
    <property type="term" value="P:tetrahydrofolate biosynthetic process"/>
    <property type="evidence" value="ECO:0007669"/>
    <property type="project" value="UniProtKB-UniPathway"/>
</dbReference>
<dbReference type="CDD" id="cd00739">
    <property type="entry name" value="DHPS"/>
    <property type="match status" value="1"/>
</dbReference>
<dbReference type="FunFam" id="3.20.20.20:FF:000012">
    <property type="entry name" value="Dihydropteroate synthase"/>
    <property type="match status" value="1"/>
</dbReference>
<dbReference type="Gene3D" id="3.20.20.20">
    <property type="entry name" value="Dihydropteroate synthase-like"/>
    <property type="match status" value="1"/>
</dbReference>
<dbReference type="InterPro" id="IPR045031">
    <property type="entry name" value="DHP_synth-like"/>
</dbReference>
<dbReference type="InterPro" id="IPR006390">
    <property type="entry name" value="DHP_synth_dom"/>
</dbReference>
<dbReference type="InterPro" id="IPR011005">
    <property type="entry name" value="Dihydropteroate_synth-like_sf"/>
</dbReference>
<dbReference type="InterPro" id="IPR000489">
    <property type="entry name" value="Pterin-binding_dom"/>
</dbReference>
<dbReference type="NCBIfam" id="TIGR01496">
    <property type="entry name" value="DHPS"/>
    <property type="match status" value="1"/>
</dbReference>
<dbReference type="PANTHER" id="PTHR20941">
    <property type="entry name" value="FOLATE SYNTHESIS PROTEINS"/>
    <property type="match status" value="1"/>
</dbReference>
<dbReference type="PANTHER" id="PTHR20941:SF1">
    <property type="entry name" value="FOLIC ACID SYNTHESIS PROTEIN FOL1"/>
    <property type="match status" value="1"/>
</dbReference>
<dbReference type="Pfam" id="PF00809">
    <property type="entry name" value="Pterin_bind"/>
    <property type="match status" value="1"/>
</dbReference>
<dbReference type="SUPFAM" id="SSF51717">
    <property type="entry name" value="Dihydropteroate synthetase-like"/>
    <property type="match status" value="1"/>
</dbReference>
<dbReference type="PROSITE" id="PS00792">
    <property type="entry name" value="DHPS_1"/>
    <property type="match status" value="1"/>
</dbReference>
<dbReference type="PROSITE" id="PS00793">
    <property type="entry name" value="DHPS_2"/>
    <property type="match status" value="1"/>
</dbReference>
<dbReference type="PROSITE" id="PS50972">
    <property type="entry name" value="PTERIN_BINDING"/>
    <property type="match status" value="1"/>
</dbReference>
<name>DHPS_STRPN</name>
<sequence>MSSKANHAKTVICGIINVTPDSFSDGGQFFALEQALQQARKLIAEGASMLDIGGESTRPGSSYVEIEEEIQRVVPVIKAIRKESDVLISIDTWKSQVAEAALAAGADLVNDITGLMGDEKMAYVVAEARAKVVIMFNPVMARPQHPSSLIFPHFGFGQTFTEKELADFETLPIEDLMVAFFERALARAAEAGIAPENILLDPGIGFGLTKKENLLLLRDLDKLHQKGYPIFLGVSRKRFVINILEENGFEVNPETELGFRNRDTASAHVTSIAARQGVEVVRVHDVASHRMAVEIASAIRLADEAENLDLKQYK</sequence>
<evidence type="ECO:0000250" key="1">
    <source>
        <dbReference type="UniProtKB" id="P0AC13"/>
    </source>
</evidence>
<evidence type="ECO:0000250" key="2">
    <source>
        <dbReference type="UniProtKB" id="P9WND1"/>
    </source>
</evidence>
<evidence type="ECO:0000255" key="3">
    <source>
        <dbReference type="PROSITE-ProRule" id="PRU00334"/>
    </source>
</evidence>
<evidence type="ECO:0000305" key="4"/>